<gene>
    <name evidence="1" type="primary">rplL</name>
    <name type="ordered locus">DICTH_1257</name>
</gene>
<proteinExistence type="inferred from homology"/>
<evidence type="ECO:0000255" key="1">
    <source>
        <dbReference type="HAMAP-Rule" id="MF_00368"/>
    </source>
</evidence>
<evidence type="ECO:0000305" key="2"/>
<sequence>MNKEEIIQAIKEMKVTELVELVKALEEEFGVSAAMPVAAVGSPVAGAAAAAPVEEKTTFDVILKDAGANKIKVLKVVREITGLGLKEAKDLVDSTPKPIKEGVSKQEAEEIKAKLEAEGAVVEIK</sequence>
<comment type="function">
    <text evidence="1">Forms part of the ribosomal stalk which helps the ribosome interact with GTP-bound translation factors. Is thus essential for accurate translation.</text>
</comment>
<comment type="subunit">
    <text evidence="1">Homodimer. Part of the ribosomal stalk of the 50S ribosomal subunit. Forms a multimeric L10(L12)X complex, where L10 forms an elongated spine to which 2 to 4 L12 dimers bind in a sequential fashion. Binds GTP-bound translation factors.</text>
</comment>
<comment type="similarity">
    <text evidence="1">Belongs to the bacterial ribosomal protein bL12 family.</text>
</comment>
<organism>
    <name type="scientific">Dictyoglomus thermophilum (strain ATCC 35947 / DSM 3960 / H-6-12)</name>
    <dbReference type="NCBI Taxonomy" id="309799"/>
    <lineage>
        <taxon>Bacteria</taxon>
        <taxon>Pseudomonadati</taxon>
        <taxon>Dictyoglomota</taxon>
        <taxon>Dictyoglomia</taxon>
        <taxon>Dictyoglomales</taxon>
        <taxon>Dictyoglomaceae</taxon>
        <taxon>Dictyoglomus</taxon>
    </lineage>
</organism>
<accession>B5YEX7</accession>
<feature type="chain" id="PRO_1000121427" description="Large ribosomal subunit protein bL12">
    <location>
        <begin position="1"/>
        <end position="125"/>
    </location>
</feature>
<protein>
    <recommendedName>
        <fullName evidence="1">Large ribosomal subunit protein bL12</fullName>
    </recommendedName>
    <alternativeName>
        <fullName evidence="2">50S ribosomal protein L7/L12</fullName>
    </alternativeName>
</protein>
<keyword id="KW-0687">Ribonucleoprotein</keyword>
<keyword id="KW-0689">Ribosomal protein</keyword>
<reference key="1">
    <citation type="journal article" date="2014" name="Genome Announc.">
        <title>Complete Genome Sequence of the Extreme Thermophile Dictyoglomus thermophilum H-6-12.</title>
        <authorList>
            <person name="Coil D.A."/>
            <person name="Badger J.H."/>
            <person name="Forberger H.C."/>
            <person name="Riggs F."/>
            <person name="Madupu R."/>
            <person name="Fedorova N."/>
            <person name="Ward N."/>
            <person name="Robb F.T."/>
            <person name="Eisen J.A."/>
        </authorList>
    </citation>
    <scope>NUCLEOTIDE SEQUENCE [LARGE SCALE GENOMIC DNA]</scope>
    <source>
        <strain>ATCC 35947 / DSM 3960 / H-6-12</strain>
    </source>
</reference>
<name>RL7_DICT6</name>
<dbReference type="EMBL" id="CP001146">
    <property type="protein sequence ID" value="ACI20042.1"/>
    <property type="molecule type" value="Genomic_DNA"/>
</dbReference>
<dbReference type="RefSeq" id="WP_012548674.1">
    <property type="nucleotide sequence ID" value="NC_011297.1"/>
</dbReference>
<dbReference type="SMR" id="B5YEX7"/>
<dbReference type="STRING" id="309799.DICTH_1257"/>
<dbReference type="PaxDb" id="309799-DICTH_1257"/>
<dbReference type="KEGG" id="dth:DICTH_1257"/>
<dbReference type="eggNOG" id="COG0222">
    <property type="taxonomic scope" value="Bacteria"/>
</dbReference>
<dbReference type="HOGENOM" id="CLU_086499_3_2_0"/>
<dbReference type="OrthoDB" id="9811748at2"/>
<dbReference type="Proteomes" id="UP000001733">
    <property type="component" value="Chromosome"/>
</dbReference>
<dbReference type="GO" id="GO:0022625">
    <property type="term" value="C:cytosolic large ribosomal subunit"/>
    <property type="evidence" value="ECO:0007669"/>
    <property type="project" value="TreeGrafter"/>
</dbReference>
<dbReference type="GO" id="GO:0003729">
    <property type="term" value="F:mRNA binding"/>
    <property type="evidence" value="ECO:0007669"/>
    <property type="project" value="TreeGrafter"/>
</dbReference>
<dbReference type="GO" id="GO:0003735">
    <property type="term" value="F:structural constituent of ribosome"/>
    <property type="evidence" value="ECO:0007669"/>
    <property type="project" value="InterPro"/>
</dbReference>
<dbReference type="GO" id="GO:0006412">
    <property type="term" value="P:translation"/>
    <property type="evidence" value="ECO:0007669"/>
    <property type="project" value="UniProtKB-UniRule"/>
</dbReference>
<dbReference type="CDD" id="cd00387">
    <property type="entry name" value="Ribosomal_L7_L12"/>
    <property type="match status" value="1"/>
</dbReference>
<dbReference type="FunFam" id="3.30.1390.10:FF:000001">
    <property type="entry name" value="50S ribosomal protein L7/L12"/>
    <property type="match status" value="1"/>
</dbReference>
<dbReference type="Gene3D" id="3.30.1390.10">
    <property type="match status" value="1"/>
</dbReference>
<dbReference type="Gene3D" id="1.20.5.710">
    <property type="entry name" value="Single helix bin"/>
    <property type="match status" value="1"/>
</dbReference>
<dbReference type="HAMAP" id="MF_00368">
    <property type="entry name" value="Ribosomal_bL12"/>
    <property type="match status" value="1"/>
</dbReference>
<dbReference type="InterPro" id="IPR000206">
    <property type="entry name" value="Ribosomal_bL12"/>
</dbReference>
<dbReference type="InterPro" id="IPR013823">
    <property type="entry name" value="Ribosomal_bL12_C"/>
</dbReference>
<dbReference type="InterPro" id="IPR014719">
    <property type="entry name" value="Ribosomal_bL12_C/ClpS-like"/>
</dbReference>
<dbReference type="InterPro" id="IPR008932">
    <property type="entry name" value="Ribosomal_bL12_oligo"/>
</dbReference>
<dbReference type="InterPro" id="IPR036235">
    <property type="entry name" value="Ribosomal_bL12_oligo_N_sf"/>
</dbReference>
<dbReference type="NCBIfam" id="TIGR00855">
    <property type="entry name" value="L12"/>
    <property type="match status" value="1"/>
</dbReference>
<dbReference type="PANTHER" id="PTHR45987">
    <property type="entry name" value="39S RIBOSOMAL PROTEIN L12"/>
    <property type="match status" value="1"/>
</dbReference>
<dbReference type="PANTHER" id="PTHR45987:SF4">
    <property type="entry name" value="LARGE RIBOSOMAL SUBUNIT PROTEIN BL12M"/>
    <property type="match status" value="1"/>
</dbReference>
<dbReference type="Pfam" id="PF00542">
    <property type="entry name" value="Ribosomal_L12"/>
    <property type="match status" value="1"/>
</dbReference>
<dbReference type="Pfam" id="PF16320">
    <property type="entry name" value="Ribosomal_L12_N"/>
    <property type="match status" value="1"/>
</dbReference>
<dbReference type="SUPFAM" id="SSF54736">
    <property type="entry name" value="ClpS-like"/>
    <property type="match status" value="1"/>
</dbReference>
<dbReference type="SUPFAM" id="SSF48300">
    <property type="entry name" value="Ribosomal protein L7/12, oligomerisation (N-terminal) domain"/>
    <property type="match status" value="1"/>
</dbReference>